<reference key="1">
    <citation type="submission" date="2007-04" db="EMBL/GenBank/DDBJ databases">
        <title>Complete sequence of Pseudomonas mendocina ymp.</title>
        <authorList>
            <consortium name="US DOE Joint Genome Institute"/>
            <person name="Copeland A."/>
            <person name="Lucas S."/>
            <person name="Lapidus A."/>
            <person name="Barry K."/>
            <person name="Glavina del Rio T."/>
            <person name="Dalin E."/>
            <person name="Tice H."/>
            <person name="Pitluck S."/>
            <person name="Kiss H."/>
            <person name="Brettin T."/>
            <person name="Detter J.C."/>
            <person name="Bruce D."/>
            <person name="Han C."/>
            <person name="Schmutz J."/>
            <person name="Larimer F."/>
            <person name="Land M."/>
            <person name="Hauser L."/>
            <person name="Kyrpides N."/>
            <person name="Mikhailova N."/>
            <person name="Hersman L."/>
            <person name="Dubois J."/>
            <person name="Maurice P."/>
            <person name="Richardson P."/>
        </authorList>
    </citation>
    <scope>NUCLEOTIDE SEQUENCE [LARGE SCALE GENOMIC DNA]</scope>
    <source>
        <strain>ymp</strain>
    </source>
</reference>
<keyword id="KW-0963">Cytoplasm</keyword>
<keyword id="KW-0488">Methylation</keyword>
<keyword id="KW-0648">Protein biosynthesis</keyword>
<sequence length="360" mass="39955">MKASLLNKLDNLSDRFEELTALLGDAEVISKQTQFRAYSKEYAEIEPVIATFRELRKVQSDLEGAQALLKESDPDLREMAEEEVAQAKEALTTLEDKLQRMLLPKDPNDGRNVYLEVRAGTGGDEAAIFSGDLFRMYSRYAEKQGWRVEVLSANEGEHGGFKEVIARVEGDNVYAKLKFESGAHRVQRVPETESQGRIHTSACTVAVLPEPDEQAAIEINPADLRVDTYRSSGAGGQHVNTTDSAIRITHIPTGTVVECQEERSQHKNRAKAMAWLAAKLQDQQEAAAHKEISETRKLLVGSGDRSERIRTYNFPQGRVTDHRINLTLYSLSEVMAGGVEAVIEPLLAEYQADQLAALGD</sequence>
<gene>
    <name evidence="1" type="primary">prfA</name>
    <name type="ordered locus">Pmen_1060</name>
</gene>
<evidence type="ECO:0000255" key="1">
    <source>
        <dbReference type="HAMAP-Rule" id="MF_00093"/>
    </source>
</evidence>
<dbReference type="EMBL" id="CP000680">
    <property type="protein sequence ID" value="ABP83827.1"/>
    <property type="molecule type" value="Genomic_DNA"/>
</dbReference>
<dbReference type="SMR" id="A4XR61"/>
<dbReference type="STRING" id="399739.Pmen_1060"/>
<dbReference type="KEGG" id="pmy:Pmen_1060"/>
<dbReference type="PATRIC" id="fig|399739.8.peg.1070"/>
<dbReference type="eggNOG" id="COG0216">
    <property type="taxonomic scope" value="Bacteria"/>
</dbReference>
<dbReference type="HOGENOM" id="CLU_036856_0_1_6"/>
<dbReference type="OrthoDB" id="9806673at2"/>
<dbReference type="GO" id="GO:0005737">
    <property type="term" value="C:cytoplasm"/>
    <property type="evidence" value="ECO:0007669"/>
    <property type="project" value="UniProtKB-SubCell"/>
</dbReference>
<dbReference type="GO" id="GO:0016149">
    <property type="term" value="F:translation release factor activity, codon specific"/>
    <property type="evidence" value="ECO:0007669"/>
    <property type="project" value="UniProtKB-UniRule"/>
</dbReference>
<dbReference type="FunFam" id="3.30.160.20:FF:000004">
    <property type="entry name" value="Peptide chain release factor 1"/>
    <property type="match status" value="1"/>
</dbReference>
<dbReference type="FunFam" id="3.30.70.1660:FF:000002">
    <property type="entry name" value="Peptide chain release factor 1"/>
    <property type="match status" value="1"/>
</dbReference>
<dbReference type="FunFam" id="3.30.70.1660:FF:000004">
    <property type="entry name" value="Peptide chain release factor 1"/>
    <property type="match status" value="1"/>
</dbReference>
<dbReference type="Gene3D" id="3.30.160.20">
    <property type="match status" value="1"/>
</dbReference>
<dbReference type="Gene3D" id="3.30.70.1660">
    <property type="match status" value="1"/>
</dbReference>
<dbReference type="Gene3D" id="6.10.140.1950">
    <property type="match status" value="1"/>
</dbReference>
<dbReference type="HAMAP" id="MF_00093">
    <property type="entry name" value="Rel_fac_1"/>
    <property type="match status" value="1"/>
</dbReference>
<dbReference type="InterPro" id="IPR005139">
    <property type="entry name" value="PCRF"/>
</dbReference>
<dbReference type="InterPro" id="IPR000352">
    <property type="entry name" value="Pep_chain_release_fac_I"/>
</dbReference>
<dbReference type="InterPro" id="IPR045853">
    <property type="entry name" value="Pep_chain_release_fac_I_sf"/>
</dbReference>
<dbReference type="InterPro" id="IPR050057">
    <property type="entry name" value="Prokaryotic/Mito_RF"/>
</dbReference>
<dbReference type="InterPro" id="IPR004373">
    <property type="entry name" value="RF-1"/>
</dbReference>
<dbReference type="NCBIfam" id="TIGR00019">
    <property type="entry name" value="prfA"/>
    <property type="match status" value="1"/>
</dbReference>
<dbReference type="NCBIfam" id="NF001859">
    <property type="entry name" value="PRK00591.1"/>
    <property type="match status" value="1"/>
</dbReference>
<dbReference type="PANTHER" id="PTHR43804">
    <property type="entry name" value="LD18447P"/>
    <property type="match status" value="1"/>
</dbReference>
<dbReference type="PANTHER" id="PTHR43804:SF7">
    <property type="entry name" value="LD18447P"/>
    <property type="match status" value="1"/>
</dbReference>
<dbReference type="Pfam" id="PF03462">
    <property type="entry name" value="PCRF"/>
    <property type="match status" value="1"/>
</dbReference>
<dbReference type="Pfam" id="PF00472">
    <property type="entry name" value="RF-1"/>
    <property type="match status" value="1"/>
</dbReference>
<dbReference type="SMART" id="SM00937">
    <property type="entry name" value="PCRF"/>
    <property type="match status" value="1"/>
</dbReference>
<dbReference type="SUPFAM" id="SSF75620">
    <property type="entry name" value="Release factor"/>
    <property type="match status" value="1"/>
</dbReference>
<dbReference type="PROSITE" id="PS00745">
    <property type="entry name" value="RF_PROK_I"/>
    <property type="match status" value="1"/>
</dbReference>
<name>RF1_ECTM1</name>
<accession>A4XR61</accession>
<protein>
    <recommendedName>
        <fullName evidence="1">Peptide chain release factor 1</fullName>
        <shortName evidence="1">RF-1</shortName>
    </recommendedName>
</protein>
<comment type="function">
    <text evidence="1">Peptide chain release factor 1 directs the termination of translation in response to the peptide chain termination codons UAG and UAA.</text>
</comment>
<comment type="subcellular location">
    <subcellularLocation>
        <location evidence="1">Cytoplasm</location>
    </subcellularLocation>
</comment>
<comment type="PTM">
    <text evidence="1">Methylated by PrmC. Methylation increases the termination efficiency of RF1.</text>
</comment>
<comment type="similarity">
    <text evidence="1">Belongs to the prokaryotic/mitochondrial release factor family.</text>
</comment>
<organism>
    <name type="scientific">Ectopseudomonas mendocina (strain ymp)</name>
    <name type="common">Pseudomonas mendocina</name>
    <dbReference type="NCBI Taxonomy" id="399739"/>
    <lineage>
        <taxon>Bacteria</taxon>
        <taxon>Pseudomonadati</taxon>
        <taxon>Pseudomonadota</taxon>
        <taxon>Gammaproteobacteria</taxon>
        <taxon>Pseudomonadales</taxon>
        <taxon>Pseudomonadaceae</taxon>
        <taxon>Ectopseudomonas</taxon>
    </lineage>
</organism>
<feature type="chain" id="PRO_1000004934" description="Peptide chain release factor 1">
    <location>
        <begin position="1"/>
        <end position="360"/>
    </location>
</feature>
<feature type="modified residue" description="N5-methylglutamine" evidence="1">
    <location>
        <position position="237"/>
    </location>
</feature>
<proteinExistence type="inferred from homology"/>